<gene>
    <name evidence="1" type="primary">ileS</name>
    <name type="ordered locus">PCC8801_2707</name>
</gene>
<sequence length="959" mass="109180">MTEPKSYKDTVNLPQTDFSMRANAVQREPEIQQFWTENCIYEQLSQNNPEDLFILHDGPPYANGSLHMGHALNKTLKDIINKYKLLRGHKVRYVPGWDCHGLPIELKVLQSMKSEEREGLTPLKLRRKARDFALKTQQEQAEGFKRYGVWGDWENPYLTLTPEYEAAQIGVFGQMALKGYIYRGLKPVHWSPSSRTALAEAELEYPEGHTSQSIFAAFPIIKSSKDAQEILDPFLSNLGVAIWTTTPWTLPGNLAVALNPELTYAIVEQTSNLCNYQYIIVAADLVERLSATFSTELTVKATLPGQILEHTIYRHPLYDRESEIVIGGDYVTTESGTGLVHTAPGHGQEDYIVGQRYGLQVLSPVDDAGNFTEEAGQFSGLNVLKDANQAIINELKNKGSLLKEEPYLHKYPYDWRTKKPTIFRATEQWFASVEGFREAALEAIKSVNWIPPQGENRITPMVSDRSDWCISRQRSWGVPIPVFYNEETNEPLLTEETINHVQAIIAKQGSDAWWELSIEELLPEQYKKDAHKYRRGTDTMDVWFDSGSSWAAVAKQREELKYPVDIYLEGSDQHRGWFQSSLLTSVAVNGIAPYKTVLTHGFVLDEKGHKMSKSLGNIVDPLVIINGGKNQKQEPPYGADVLRLWVSSVDYSSDVPIGQTILKQLSDVYRKIRNTARFLLGNLHDFDPEKDTVSYDQLPELDQYMLHRITEVFTEVTDAFEKFQFFRFFQTVQNFCVVDLSNFYLDIAKDRLYISDTNSLRRRSCQTVLKVAVESLAKAIAPVLCHMAEDIWQFLPYKTPYQSVFASGWVEMQKQWERPELTASWGKLRQIRTEVNKVLEQARNEKAIGSSLDAKVLLYVSDQDFKKQLESFNPNDSLKGNQVDELRYLVLASQVELVDSLEAIKKADYQSESELVSVGVVKAEGQKCDRCWNYSTKVGEFSDDPTICERCNAALVGEF</sequence>
<accession>B7K5H5</accession>
<protein>
    <recommendedName>
        <fullName evidence="1">Isoleucine--tRNA ligase</fullName>
        <ecNumber evidence="1">6.1.1.5</ecNumber>
    </recommendedName>
    <alternativeName>
        <fullName evidence="1">Isoleucyl-tRNA synthetase</fullName>
        <shortName evidence="1">IleRS</shortName>
    </alternativeName>
</protein>
<name>SYI_RIPO1</name>
<keyword id="KW-0030">Aminoacyl-tRNA synthetase</keyword>
<keyword id="KW-0067">ATP-binding</keyword>
<keyword id="KW-0963">Cytoplasm</keyword>
<keyword id="KW-0436">Ligase</keyword>
<keyword id="KW-0479">Metal-binding</keyword>
<keyword id="KW-0547">Nucleotide-binding</keyword>
<keyword id="KW-0648">Protein biosynthesis</keyword>
<keyword id="KW-1185">Reference proteome</keyword>
<keyword id="KW-0862">Zinc</keyword>
<dbReference type="EC" id="6.1.1.5" evidence="1"/>
<dbReference type="EMBL" id="CP001287">
    <property type="protein sequence ID" value="ACK66708.1"/>
    <property type="molecule type" value="Genomic_DNA"/>
</dbReference>
<dbReference type="RefSeq" id="WP_012595975.1">
    <property type="nucleotide sequence ID" value="NC_011726.1"/>
</dbReference>
<dbReference type="SMR" id="B7K5H5"/>
<dbReference type="STRING" id="41431.PCC8801_2707"/>
<dbReference type="KEGG" id="cyp:PCC8801_2707"/>
<dbReference type="eggNOG" id="COG0060">
    <property type="taxonomic scope" value="Bacteria"/>
</dbReference>
<dbReference type="HOGENOM" id="CLU_001493_7_0_3"/>
<dbReference type="OrthoDB" id="9810365at2"/>
<dbReference type="Proteomes" id="UP000008204">
    <property type="component" value="Chromosome"/>
</dbReference>
<dbReference type="GO" id="GO:0005737">
    <property type="term" value="C:cytoplasm"/>
    <property type="evidence" value="ECO:0007669"/>
    <property type="project" value="UniProtKB-SubCell"/>
</dbReference>
<dbReference type="GO" id="GO:0002161">
    <property type="term" value="F:aminoacyl-tRNA deacylase activity"/>
    <property type="evidence" value="ECO:0007669"/>
    <property type="project" value="InterPro"/>
</dbReference>
<dbReference type="GO" id="GO:0005524">
    <property type="term" value="F:ATP binding"/>
    <property type="evidence" value="ECO:0007669"/>
    <property type="project" value="UniProtKB-UniRule"/>
</dbReference>
<dbReference type="GO" id="GO:0004822">
    <property type="term" value="F:isoleucine-tRNA ligase activity"/>
    <property type="evidence" value="ECO:0007669"/>
    <property type="project" value="UniProtKB-UniRule"/>
</dbReference>
<dbReference type="GO" id="GO:0000049">
    <property type="term" value="F:tRNA binding"/>
    <property type="evidence" value="ECO:0007669"/>
    <property type="project" value="InterPro"/>
</dbReference>
<dbReference type="GO" id="GO:0008270">
    <property type="term" value="F:zinc ion binding"/>
    <property type="evidence" value="ECO:0007669"/>
    <property type="project" value="UniProtKB-UniRule"/>
</dbReference>
<dbReference type="GO" id="GO:0006428">
    <property type="term" value="P:isoleucyl-tRNA aminoacylation"/>
    <property type="evidence" value="ECO:0007669"/>
    <property type="project" value="UniProtKB-UniRule"/>
</dbReference>
<dbReference type="CDD" id="cd07960">
    <property type="entry name" value="Anticodon_Ia_Ile_BEm"/>
    <property type="match status" value="1"/>
</dbReference>
<dbReference type="CDD" id="cd00818">
    <property type="entry name" value="IleRS_core"/>
    <property type="match status" value="1"/>
</dbReference>
<dbReference type="FunFam" id="1.10.730.20:FF:000001">
    <property type="entry name" value="Isoleucine--tRNA ligase"/>
    <property type="match status" value="1"/>
</dbReference>
<dbReference type="FunFam" id="3.40.50.620:FF:000152">
    <property type="entry name" value="Isoleucine--tRNA ligase"/>
    <property type="match status" value="1"/>
</dbReference>
<dbReference type="FunFam" id="3.90.740.10:FF:000013">
    <property type="entry name" value="Isoleucine--tRNA ligase, chloroplastic/mitochondrial"/>
    <property type="match status" value="1"/>
</dbReference>
<dbReference type="FunFam" id="1.10.10.830:FF:000002">
    <property type="entry name" value="Isoleucine--tRNA ligase, mitochondrial"/>
    <property type="match status" value="1"/>
</dbReference>
<dbReference type="Gene3D" id="1.10.730.20">
    <property type="match status" value="1"/>
</dbReference>
<dbReference type="Gene3D" id="3.40.50.620">
    <property type="entry name" value="HUPs"/>
    <property type="match status" value="2"/>
</dbReference>
<dbReference type="Gene3D" id="1.10.10.830">
    <property type="entry name" value="Ile-tRNA synthetase CP2 domain-like"/>
    <property type="match status" value="1"/>
</dbReference>
<dbReference type="HAMAP" id="MF_02002">
    <property type="entry name" value="Ile_tRNA_synth_type1"/>
    <property type="match status" value="1"/>
</dbReference>
<dbReference type="InterPro" id="IPR001412">
    <property type="entry name" value="aa-tRNA-synth_I_CS"/>
</dbReference>
<dbReference type="InterPro" id="IPR002300">
    <property type="entry name" value="aa-tRNA-synth_Ia"/>
</dbReference>
<dbReference type="InterPro" id="IPR033708">
    <property type="entry name" value="Anticodon_Ile_BEm"/>
</dbReference>
<dbReference type="InterPro" id="IPR002301">
    <property type="entry name" value="Ile-tRNA-ligase"/>
</dbReference>
<dbReference type="InterPro" id="IPR023585">
    <property type="entry name" value="Ile-tRNA-ligase_type1"/>
</dbReference>
<dbReference type="InterPro" id="IPR050081">
    <property type="entry name" value="Ile-tRNA_ligase"/>
</dbReference>
<dbReference type="InterPro" id="IPR013155">
    <property type="entry name" value="M/V/L/I-tRNA-synth_anticd-bd"/>
</dbReference>
<dbReference type="InterPro" id="IPR014729">
    <property type="entry name" value="Rossmann-like_a/b/a_fold"/>
</dbReference>
<dbReference type="InterPro" id="IPR009080">
    <property type="entry name" value="tRNAsynth_Ia_anticodon-bd"/>
</dbReference>
<dbReference type="InterPro" id="IPR009008">
    <property type="entry name" value="Val/Leu/Ile-tRNA-synth_edit"/>
</dbReference>
<dbReference type="InterPro" id="IPR010663">
    <property type="entry name" value="Znf_FPG/IleRS"/>
</dbReference>
<dbReference type="NCBIfam" id="TIGR00392">
    <property type="entry name" value="ileS"/>
    <property type="match status" value="1"/>
</dbReference>
<dbReference type="PANTHER" id="PTHR42765:SF1">
    <property type="entry name" value="ISOLEUCINE--TRNA LIGASE, MITOCHONDRIAL"/>
    <property type="match status" value="1"/>
</dbReference>
<dbReference type="PANTHER" id="PTHR42765">
    <property type="entry name" value="SOLEUCYL-TRNA SYNTHETASE"/>
    <property type="match status" value="1"/>
</dbReference>
<dbReference type="Pfam" id="PF08264">
    <property type="entry name" value="Anticodon_1"/>
    <property type="match status" value="1"/>
</dbReference>
<dbReference type="Pfam" id="PF00133">
    <property type="entry name" value="tRNA-synt_1"/>
    <property type="match status" value="1"/>
</dbReference>
<dbReference type="Pfam" id="PF06827">
    <property type="entry name" value="zf-FPG_IleRS"/>
    <property type="match status" value="1"/>
</dbReference>
<dbReference type="PRINTS" id="PR00984">
    <property type="entry name" value="TRNASYNTHILE"/>
</dbReference>
<dbReference type="SUPFAM" id="SSF47323">
    <property type="entry name" value="Anticodon-binding domain of a subclass of class I aminoacyl-tRNA synthetases"/>
    <property type="match status" value="1"/>
</dbReference>
<dbReference type="SUPFAM" id="SSF52374">
    <property type="entry name" value="Nucleotidylyl transferase"/>
    <property type="match status" value="1"/>
</dbReference>
<dbReference type="SUPFAM" id="SSF50677">
    <property type="entry name" value="ValRS/IleRS/LeuRS editing domain"/>
    <property type="match status" value="1"/>
</dbReference>
<dbReference type="PROSITE" id="PS00178">
    <property type="entry name" value="AA_TRNA_LIGASE_I"/>
    <property type="match status" value="1"/>
</dbReference>
<reference key="1">
    <citation type="journal article" date="2011" name="MBio">
        <title>Novel metabolic attributes of the genus Cyanothece, comprising a group of unicellular nitrogen-fixing Cyanobacteria.</title>
        <authorList>
            <person name="Bandyopadhyay A."/>
            <person name="Elvitigala T."/>
            <person name="Welsh E."/>
            <person name="Stockel J."/>
            <person name="Liberton M."/>
            <person name="Min H."/>
            <person name="Sherman L.A."/>
            <person name="Pakrasi H.B."/>
        </authorList>
    </citation>
    <scope>NUCLEOTIDE SEQUENCE [LARGE SCALE GENOMIC DNA]</scope>
    <source>
        <strain>PCC 8801 / RF-1</strain>
    </source>
</reference>
<evidence type="ECO:0000255" key="1">
    <source>
        <dbReference type="HAMAP-Rule" id="MF_02002"/>
    </source>
</evidence>
<feature type="chain" id="PRO_1000189148" description="Isoleucine--tRNA ligase">
    <location>
        <begin position="1"/>
        <end position="959"/>
    </location>
</feature>
<feature type="short sequence motif" description="'HIGH' region">
    <location>
        <begin position="60"/>
        <end position="70"/>
    </location>
</feature>
<feature type="short sequence motif" description="'KMSKS' region">
    <location>
        <begin position="610"/>
        <end position="614"/>
    </location>
</feature>
<feature type="binding site" evidence="1">
    <location>
        <position position="569"/>
    </location>
    <ligand>
        <name>L-isoleucyl-5'-AMP</name>
        <dbReference type="ChEBI" id="CHEBI:178002"/>
    </ligand>
</feature>
<feature type="binding site" evidence="1">
    <location>
        <position position="613"/>
    </location>
    <ligand>
        <name>ATP</name>
        <dbReference type="ChEBI" id="CHEBI:30616"/>
    </ligand>
</feature>
<feature type="binding site" evidence="1">
    <location>
        <position position="928"/>
    </location>
    <ligand>
        <name>Zn(2+)</name>
        <dbReference type="ChEBI" id="CHEBI:29105"/>
    </ligand>
</feature>
<feature type="binding site" evidence="1">
    <location>
        <position position="931"/>
    </location>
    <ligand>
        <name>Zn(2+)</name>
        <dbReference type="ChEBI" id="CHEBI:29105"/>
    </ligand>
</feature>
<feature type="binding site" evidence="1">
    <location>
        <position position="948"/>
    </location>
    <ligand>
        <name>Zn(2+)</name>
        <dbReference type="ChEBI" id="CHEBI:29105"/>
    </ligand>
</feature>
<feature type="binding site" evidence="1">
    <location>
        <position position="951"/>
    </location>
    <ligand>
        <name>Zn(2+)</name>
        <dbReference type="ChEBI" id="CHEBI:29105"/>
    </ligand>
</feature>
<comment type="function">
    <text evidence="1">Catalyzes the attachment of isoleucine to tRNA(Ile). As IleRS can inadvertently accommodate and process structurally similar amino acids such as valine, to avoid such errors it has two additional distinct tRNA(Ile)-dependent editing activities. One activity is designated as 'pretransfer' editing and involves the hydrolysis of activated Val-AMP. The other activity is designated 'posttransfer' editing and involves deacylation of mischarged Val-tRNA(Ile).</text>
</comment>
<comment type="catalytic activity">
    <reaction evidence="1">
        <text>tRNA(Ile) + L-isoleucine + ATP = L-isoleucyl-tRNA(Ile) + AMP + diphosphate</text>
        <dbReference type="Rhea" id="RHEA:11060"/>
        <dbReference type="Rhea" id="RHEA-COMP:9666"/>
        <dbReference type="Rhea" id="RHEA-COMP:9695"/>
        <dbReference type="ChEBI" id="CHEBI:30616"/>
        <dbReference type="ChEBI" id="CHEBI:33019"/>
        <dbReference type="ChEBI" id="CHEBI:58045"/>
        <dbReference type="ChEBI" id="CHEBI:78442"/>
        <dbReference type="ChEBI" id="CHEBI:78528"/>
        <dbReference type="ChEBI" id="CHEBI:456215"/>
        <dbReference type="EC" id="6.1.1.5"/>
    </reaction>
</comment>
<comment type="cofactor">
    <cofactor evidence="1">
        <name>Zn(2+)</name>
        <dbReference type="ChEBI" id="CHEBI:29105"/>
    </cofactor>
    <text evidence="1">Binds 1 zinc ion per subunit.</text>
</comment>
<comment type="subunit">
    <text evidence="1">Monomer.</text>
</comment>
<comment type="subcellular location">
    <subcellularLocation>
        <location evidence="1">Cytoplasm</location>
    </subcellularLocation>
</comment>
<comment type="domain">
    <text evidence="1">IleRS has two distinct active sites: one for aminoacylation and one for editing. The misactivated valine is translocated from the active site to the editing site, which sterically excludes the correctly activated isoleucine. The single editing site contains two valyl binding pockets, one specific for each substrate (Val-AMP or Val-tRNA(Ile)).</text>
</comment>
<comment type="similarity">
    <text evidence="1">Belongs to the class-I aminoacyl-tRNA synthetase family. IleS type 1 subfamily.</text>
</comment>
<organism>
    <name type="scientific">Rippkaea orientalis (strain PCC 8801 / RF-1)</name>
    <name type="common">Cyanothece sp. (strain PCC 8801)</name>
    <dbReference type="NCBI Taxonomy" id="41431"/>
    <lineage>
        <taxon>Bacteria</taxon>
        <taxon>Bacillati</taxon>
        <taxon>Cyanobacteriota</taxon>
        <taxon>Cyanophyceae</taxon>
        <taxon>Oscillatoriophycideae</taxon>
        <taxon>Chroococcales</taxon>
        <taxon>Aphanothecaceae</taxon>
        <taxon>Rippkaea</taxon>
        <taxon>Rippkaea orientalis</taxon>
    </lineage>
</organism>
<proteinExistence type="inferred from homology"/>